<feature type="signal peptide" evidence="1">
    <location>
        <begin position="1"/>
        <end position="25"/>
    </location>
</feature>
<feature type="chain" id="PRO_0000008780" description="Fasciclin-like arabinogalactan protein 8">
    <location>
        <begin position="26"/>
        <end position="392"/>
    </location>
</feature>
<feature type="propeptide" id="PRO_0000008781" description="Removed in mature form" evidence="1">
    <location>
        <begin position="393"/>
        <end position="420"/>
    </location>
</feature>
<feature type="domain" description="FAS1 1" evidence="2">
    <location>
        <begin position="26"/>
        <end position="172"/>
    </location>
</feature>
<feature type="domain" description="FAS1 2" evidence="2">
    <location>
        <begin position="186"/>
        <end position="326"/>
    </location>
</feature>
<feature type="region of interest" description="Disordered" evidence="3">
    <location>
        <begin position="335"/>
        <end position="394"/>
    </location>
</feature>
<feature type="compositionally biased region" description="Pro residues" evidence="3">
    <location>
        <begin position="339"/>
        <end position="371"/>
    </location>
</feature>
<feature type="lipid moiety-binding region" description="GPI-anchor amidated asparagine" evidence="1">
    <location>
        <position position="392"/>
    </location>
</feature>
<feature type="glycosylation site" description="N-linked (GlcNAc...) asparagine" evidence="1">
    <location>
        <position position="27"/>
    </location>
</feature>
<feature type="glycosylation site" description="N-linked (GlcNAc...) asparagine" evidence="1">
    <location>
        <position position="128"/>
    </location>
</feature>
<feature type="glycosylation site" description="N-linked (GlcNAc...) asparagine" evidence="1">
    <location>
        <position position="162"/>
    </location>
</feature>
<feature type="glycosylation site" description="N-linked (GlcNAc...) asparagine" evidence="1">
    <location>
        <position position="189"/>
    </location>
</feature>
<feature type="glycosylation site" description="N-linked (GlcNAc...) asparagine" evidence="1">
    <location>
        <position position="273"/>
    </location>
</feature>
<feature type="sequence conflict" description="In Ref. 4, 5 and 6." evidence="6" ref="4 5 6">
    <original>I</original>
    <variation>V</variation>
    <location>
        <position position="412"/>
    </location>
</feature>
<accession>O22126</accession>
<accession>Q56ZW9</accession>
<accession>Q8L9B1</accession>
<accession>Q9FR46</accession>
<dbReference type="EMBL" id="AC002387">
    <property type="protein sequence ID" value="AAB82617.1"/>
    <property type="molecule type" value="Genomic_DNA"/>
</dbReference>
<dbReference type="EMBL" id="CP002685">
    <property type="protein sequence ID" value="AEC10559.1"/>
    <property type="molecule type" value="Genomic_DNA"/>
</dbReference>
<dbReference type="EMBL" id="AY094443">
    <property type="protein sequence ID" value="AAM19815.1"/>
    <property type="molecule type" value="mRNA"/>
</dbReference>
<dbReference type="EMBL" id="AY149956">
    <property type="protein sequence ID" value="AAN31110.1"/>
    <property type="molecule type" value="mRNA"/>
</dbReference>
<dbReference type="EMBL" id="AY088542">
    <property type="protein sequence ID" value="AAM66074.1"/>
    <property type="molecule type" value="mRNA"/>
</dbReference>
<dbReference type="EMBL" id="AF195889">
    <property type="protein sequence ID" value="AAG24276.1"/>
    <property type="molecule type" value="mRNA"/>
</dbReference>
<dbReference type="EMBL" id="AK220841">
    <property type="protein sequence ID" value="BAD94169.1"/>
    <property type="molecule type" value="mRNA"/>
</dbReference>
<dbReference type="PIR" id="H84890">
    <property type="entry name" value="H84890"/>
</dbReference>
<dbReference type="RefSeq" id="NP_566043.1">
    <property type="nucleotide sequence ID" value="NM_130109.3"/>
</dbReference>
<dbReference type="SMR" id="O22126"/>
<dbReference type="BioGRID" id="4491">
    <property type="interactions" value="1"/>
</dbReference>
<dbReference type="FunCoup" id="O22126">
    <property type="interactions" value="285"/>
</dbReference>
<dbReference type="STRING" id="3702.O22126"/>
<dbReference type="GlyCosmos" id="O22126">
    <property type="glycosylation" value="5 sites, No reported glycans"/>
</dbReference>
<dbReference type="GlyGen" id="O22126">
    <property type="glycosylation" value="7 sites"/>
</dbReference>
<dbReference type="PaxDb" id="3702-AT2G45470.1"/>
<dbReference type="ProteomicsDB" id="228912"/>
<dbReference type="EnsemblPlants" id="AT2G45470.1">
    <property type="protein sequence ID" value="AT2G45470.1"/>
    <property type="gene ID" value="AT2G45470"/>
</dbReference>
<dbReference type="GeneID" id="819155"/>
<dbReference type="Gramene" id="AT2G45470.1">
    <property type="protein sequence ID" value="AT2G45470.1"/>
    <property type="gene ID" value="AT2G45470"/>
</dbReference>
<dbReference type="KEGG" id="ath:AT2G45470"/>
<dbReference type="Araport" id="AT2G45470"/>
<dbReference type="TAIR" id="AT2G45470">
    <property type="gene designation" value="FLA8"/>
</dbReference>
<dbReference type="eggNOG" id="ENOG502QV96">
    <property type="taxonomic scope" value="Eukaryota"/>
</dbReference>
<dbReference type="HOGENOM" id="CLU_036139_0_0_1"/>
<dbReference type="InParanoid" id="O22126"/>
<dbReference type="OMA" id="NTMIILM"/>
<dbReference type="PhylomeDB" id="O22126"/>
<dbReference type="CD-CODE" id="4299E36E">
    <property type="entry name" value="Nucleolus"/>
</dbReference>
<dbReference type="PRO" id="PR:O22126"/>
<dbReference type="Proteomes" id="UP000006548">
    <property type="component" value="Chromosome 2"/>
</dbReference>
<dbReference type="ExpressionAtlas" id="O22126">
    <property type="expression patterns" value="baseline and differential"/>
</dbReference>
<dbReference type="GO" id="GO:0048046">
    <property type="term" value="C:apoplast"/>
    <property type="evidence" value="ECO:0007005"/>
    <property type="project" value="TAIR"/>
</dbReference>
<dbReference type="GO" id="GO:0005829">
    <property type="term" value="C:cytosol"/>
    <property type="evidence" value="ECO:0007005"/>
    <property type="project" value="TAIR"/>
</dbReference>
<dbReference type="GO" id="GO:0005886">
    <property type="term" value="C:plasma membrane"/>
    <property type="evidence" value="ECO:0007005"/>
    <property type="project" value="TAIR"/>
</dbReference>
<dbReference type="GO" id="GO:0099503">
    <property type="term" value="C:secretory vesicle"/>
    <property type="evidence" value="ECO:0007005"/>
    <property type="project" value="TAIR"/>
</dbReference>
<dbReference type="GO" id="GO:0098552">
    <property type="term" value="C:side of membrane"/>
    <property type="evidence" value="ECO:0007669"/>
    <property type="project" value="UniProtKB-KW"/>
</dbReference>
<dbReference type="FunFam" id="2.30.180.10:FF:000008">
    <property type="entry name" value="Fasciclin-like arabinogalactan protein 10"/>
    <property type="match status" value="1"/>
</dbReference>
<dbReference type="FunFam" id="2.30.180.10:FF:000010">
    <property type="entry name" value="Fasciclin-like arabinogalactan protein 2"/>
    <property type="match status" value="1"/>
</dbReference>
<dbReference type="Gene3D" id="2.30.180.10">
    <property type="entry name" value="FAS1 domain"/>
    <property type="match status" value="2"/>
</dbReference>
<dbReference type="InterPro" id="IPR036378">
    <property type="entry name" value="FAS1_dom_sf"/>
</dbReference>
<dbReference type="InterPro" id="IPR000782">
    <property type="entry name" value="FAS1_domain"/>
</dbReference>
<dbReference type="InterPro" id="IPR033254">
    <property type="entry name" value="Plant_FLA"/>
</dbReference>
<dbReference type="PANTHER" id="PTHR32382">
    <property type="entry name" value="FASCICLIN-LIKE ARABINOGALACTAN PROTEIN"/>
    <property type="match status" value="1"/>
</dbReference>
<dbReference type="PANTHER" id="PTHR32382:SF5">
    <property type="entry name" value="FASCICLIN-LIKE ARABINOGALACTAN PROTEIN 8"/>
    <property type="match status" value="1"/>
</dbReference>
<dbReference type="Pfam" id="PF02469">
    <property type="entry name" value="Fasciclin"/>
    <property type="match status" value="1"/>
</dbReference>
<dbReference type="SMART" id="SM00554">
    <property type="entry name" value="FAS1"/>
    <property type="match status" value="1"/>
</dbReference>
<dbReference type="SUPFAM" id="SSF82153">
    <property type="entry name" value="FAS1 domain"/>
    <property type="match status" value="2"/>
</dbReference>
<dbReference type="PROSITE" id="PS50213">
    <property type="entry name" value="FAS1"/>
    <property type="match status" value="2"/>
</dbReference>
<comment type="function">
    <text>May be a cell surface adhesion protein.</text>
</comment>
<comment type="subcellular location">
    <subcellularLocation>
        <location>Cell membrane</location>
        <topology>Lipid-anchor</topology>
        <topology>GPI-anchor</topology>
    </subcellularLocation>
</comment>
<comment type="tissue specificity">
    <text evidence="4 5">Expressed mainly in flowers and to a lesser extent in leaves and roots.</text>
</comment>
<comment type="induction">
    <text evidence="5">Down-regulated by abscisic acid (ABA).</text>
</comment>
<comment type="similarity">
    <text evidence="6">Belongs to the fasciclin-like AGP family.</text>
</comment>
<protein>
    <recommendedName>
        <fullName>Fasciclin-like arabinogalactan protein 8</fullName>
        <shortName>AtAGP8</shortName>
    </recommendedName>
</protein>
<sequence>MAASQTFSLLAFTFSLLAFASTVSSHNITQILADSPDYSSFNSYLSQTKLADEINSRTTITVLVLNNGAMSALAGKHPLSVIKSALSLLVLLDYYDPQKLHKISKGTTLSTTLYQTTGNAPGNLGFVNITDLKGGKVGFGSAASGSKLDSSYTKSVKQIPYNISILEIDAPIIAPGVLTAPAPSASLSNITGLLEKAGCKTFANLLVSSGVLKTYESAVEKGLTVFAPSDEAFKAEGVPDLTKLTQAEVVSLLEYHALAEYKPKGSLKTNKNNISTLATNGAGKFDLTTSTSGDEVILHTGVAPSRLADTVLDATPVVIFTVDNVLLPAELFGKSKSPSPAPAPEPVTAPTPSPADAPSPTAASPPAPPTDESPESAPSDSPTGSANSKSANAAVGVSTPSLFTALVTIAAIAVSVSLCS</sequence>
<organism>
    <name type="scientific">Arabidopsis thaliana</name>
    <name type="common">Mouse-ear cress</name>
    <dbReference type="NCBI Taxonomy" id="3702"/>
    <lineage>
        <taxon>Eukaryota</taxon>
        <taxon>Viridiplantae</taxon>
        <taxon>Streptophyta</taxon>
        <taxon>Embryophyta</taxon>
        <taxon>Tracheophyta</taxon>
        <taxon>Spermatophyta</taxon>
        <taxon>Magnoliopsida</taxon>
        <taxon>eudicotyledons</taxon>
        <taxon>Gunneridae</taxon>
        <taxon>Pentapetalae</taxon>
        <taxon>rosids</taxon>
        <taxon>malvids</taxon>
        <taxon>Brassicales</taxon>
        <taxon>Brassicaceae</taxon>
        <taxon>Camelineae</taxon>
        <taxon>Arabidopsis</taxon>
    </lineage>
</organism>
<name>FLA8_ARATH</name>
<proteinExistence type="evidence at transcript level"/>
<gene>
    <name type="primary">FLA8</name>
    <name type="ordered locus">At2g45470</name>
    <name type="ORF">F4L23.2</name>
</gene>
<reference key="1">
    <citation type="journal article" date="1999" name="Nature">
        <title>Sequence and analysis of chromosome 2 of the plant Arabidopsis thaliana.</title>
        <authorList>
            <person name="Lin X."/>
            <person name="Kaul S."/>
            <person name="Rounsley S.D."/>
            <person name="Shea T.P."/>
            <person name="Benito M.-I."/>
            <person name="Town C.D."/>
            <person name="Fujii C.Y."/>
            <person name="Mason T.M."/>
            <person name="Bowman C.L."/>
            <person name="Barnstead M.E."/>
            <person name="Feldblyum T.V."/>
            <person name="Buell C.R."/>
            <person name="Ketchum K.A."/>
            <person name="Lee J.J."/>
            <person name="Ronning C.M."/>
            <person name="Koo H.L."/>
            <person name="Moffat K.S."/>
            <person name="Cronin L.A."/>
            <person name="Shen M."/>
            <person name="Pai G."/>
            <person name="Van Aken S."/>
            <person name="Umayam L."/>
            <person name="Tallon L.J."/>
            <person name="Gill J.E."/>
            <person name="Adams M.D."/>
            <person name="Carrera A.J."/>
            <person name="Creasy T.H."/>
            <person name="Goodman H.M."/>
            <person name="Somerville C.R."/>
            <person name="Copenhaver G.P."/>
            <person name="Preuss D."/>
            <person name="Nierman W.C."/>
            <person name="White O."/>
            <person name="Eisen J.A."/>
            <person name="Salzberg S.L."/>
            <person name="Fraser C.M."/>
            <person name="Venter J.C."/>
        </authorList>
    </citation>
    <scope>NUCLEOTIDE SEQUENCE [LARGE SCALE GENOMIC DNA]</scope>
    <source>
        <strain>cv. Columbia</strain>
    </source>
</reference>
<reference key="2">
    <citation type="journal article" date="2017" name="Plant J.">
        <title>Araport11: a complete reannotation of the Arabidopsis thaliana reference genome.</title>
        <authorList>
            <person name="Cheng C.Y."/>
            <person name="Krishnakumar V."/>
            <person name="Chan A.P."/>
            <person name="Thibaud-Nissen F."/>
            <person name="Schobel S."/>
            <person name="Town C.D."/>
        </authorList>
    </citation>
    <scope>GENOME REANNOTATION</scope>
    <source>
        <strain>cv. Columbia</strain>
    </source>
</reference>
<reference key="3">
    <citation type="journal article" date="2003" name="Science">
        <title>Empirical analysis of transcriptional activity in the Arabidopsis genome.</title>
        <authorList>
            <person name="Yamada K."/>
            <person name="Lim J."/>
            <person name="Dale J.M."/>
            <person name="Chen H."/>
            <person name="Shinn P."/>
            <person name="Palm C.J."/>
            <person name="Southwick A.M."/>
            <person name="Wu H.C."/>
            <person name="Kim C.J."/>
            <person name="Nguyen M."/>
            <person name="Pham P.K."/>
            <person name="Cheuk R.F."/>
            <person name="Karlin-Newmann G."/>
            <person name="Liu S.X."/>
            <person name="Lam B."/>
            <person name="Sakano H."/>
            <person name="Wu T."/>
            <person name="Yu G."/>
            <person name="Miranda M."/>
            <person name="Quach H.L."/>
            <person name="Tripp M."/>
            <person name="Chang C.H."/>
            <person name="Lee J.M."/>
            <person name="Toriumi M.J."/>
            <person name="Chan M.M."/>
            <person name="Tang C.C."/>
            <person name="Onodera C.S."/>
            <person name="Deng J.M."/>
            <person name="Akiyama K."/>
            <person name="Ansari Y."/>
            <person name="Arakawa T."/>
            <person name="Banh J."/>
            <person name="Banno F."/>
            <person name="Bowser L."/>
            <person name="Brooks S.Y."/>
            <person name="Carninci P."/>
            <person name="Chao Q."/>
            <person name="Choy N."/>
            <person name="Enju A."/>
            <person name="Goldsmith A.D."/>
            <person name="Gurjal M."/>
            <person name="Hansen N.F."/>
            <person name="Hayashizaki Y."/>
            <person name="Johnson-Hopson C."/>
            <person name="Hsuan V.W."/>
            <person name="Iida K."/>
            <person name="Karnes M."/>
            <person name="Khan S."/>
            <person name="Koesema E."/>
            <person name="Ishida J."/>
            <person name="Jiang P.X."/>
            <person name="Jones T."/>
            <person name="Kawai J."/>
            <person name="Kamiya A."/>
            <person name="Meyers C."/>
            <person name="Nakajima M."/>
            <person name="Narusaka M."/>
            <person name="Seki M."/>
            <person name="Sakurai T."/>
            <person name="Satou M."/>
            <person name="Tamse R."/>
            <person name="Vaysberg M."/>
            <person name="Wallender E.K."/>
            <person name="Wong C."/>
            <person name="Yamamura Y."/>
            <person name="Yuan S."/>
            <person name="Shinozaki K."/>
            <person name="Davis R.W."/>
            <person name="Theologis A."/>
            <person name="Ecker J.R."/>
        </authorList>
    </citation>
    <scope>NUCLEOTIDE SEQUENCE [LARGE SCALE MRNA]</scope>
    <source>
        <strain>cv. Columbia</strain>
    </source>
</reference>
<reference key="4">
    <citation type="submission" date="2002-03" db="EMBL/GenBank/DDBJ databases">
        <title>Full-length cDNA from Arabidopsis thaliana.</title>
        <authorList>
            <person name="Brover V.V."/>
            <person name="Troukhan M.E."/>
            <person name="Alexandrov N.A."/>
            <person name="Lu Y.-P."/>
            <person name="Flavell R.B."/>
            <person name="Feldmann K.A."/>
        </authorList>
    </citation>
    <scope>NUCLEOTIDE SEQUENCE [LARGE SCALE MRNA]</scope>
</reference>
<reference key="5">
    <citation type="journal article" date="2000" name="Plant Cell">
        <title>The classical arabinogalactan protein gene family of Arabidopsis.</title>
        <authorList>
            <person name="Schultz C.J."/>
            <person name="Johnson K.L."/>
            <person name="Currie G."/>
            <person name="Bacic A."/>
        </authorList>
    </citation>
    <scope>NUCLEOTIDE SEQUENCE [MRNA] OF 98-420</scope>
    <scope>TISSUE SPECIFICITY</scope>
    <source>
        <strain>cv. Columbia</strain>
    </source>
</reference>
<reference key="6">
    <citation type="journal article" date="2001" name="Plant Mol. Biol.">
        <title>The complex structures of arabinogalactan-proteins and the journey towards understanding function.</title>
        <authorList>
            <person name="Gaspar Y."/>
            <person name="Johnson K.L."/>
            <person name="McKenna J.A."/>
            <person name="Bacic A."/>
            <person name="Schultz C.J."/>
        </authorList>
    </citation>
    <scope>NUCLEOTIDE SEQUENCE [MRNA] OF 98-420</scope>
    <source>
        <strain>cv. Columbia</strain>
    </source>
</reference>
<reference key="7">
    <citation type="submission" date="2005-03" db="EMBL/GenBank/DDBJ databases">
        <title>Large-scale analysis of RIKEN Arabidopsis full-length (RAFL) cDNAs.</title>
        <authorList>
            <person name="Totoki Y."/>
            <person name="Seki M."/>
            <person name="Ishida J."/>
            <person name="Nakajima M."/>
            <person name="Enju A."/>
            <person name="Kamiya A."/>
            <person name="Narusaka M."/>
            <person name="Shin-i T."/>
            <person name="Nakagawa M."/>
            <person name="Sakamoto N."/>
            <person name="Oishi K."/>
            <person name="Kohara Y."/>
            <person name="Kobayashi M."/>
            <person name="Toyoda A."/>
            <person name="Sakaki Y."/>
            <person name="Sakurai T."/>
            <person name="Iida K."/>
            <person name="Akiyama K."/>
            <person name="Satou M."/>
            <person name="Toyoda T."/>
            <person name="Konagaya A."/>
            <person name="Carninci P."/>
            <person name="Kawai J."/>
            <person name="Hayashizaki Y."/>
            <person name="Shinozaki K."/>
        </authorList>
    </citation>
    <scope>NUCLEOTIDE SEQUENCE [LARGE SCALE MRNA] OF 344-420</scope>
    <source>
        <strain>cv. Columbia</strain>
    </source>
</reference>
<reference key="8">
    <citation type="journal article" date="2003" name="Plant Physiol.">
        <title>The fasciclin-like arabinogalactan proteins of Arabidopsis. A multigene family of putative cell adhesion molecules.</title>
        <authorList>
            <person name="Johnson K.L."/>
            <person name="Jones B.J."/>
            <person name="Bacic A."/>
            <person name="Schultz C.J."/>
        </authorList>
    </citation>
    <scope>GENE FAMILY ORGANIZATION</scope>
    <scope>NOMENCLATURE</scope>
    <scope>TISSUE SPECIFICITY</scope>
    <scope>INDUCTION</scope>
</reference>
<keyword id="KW-1003">Cell membrane</keyword>
<keyword id="KW-0325">Glycoprotein</keyword>
<keyword id="KW-0336">GPI-anchor</keyword>
<keyword id="KW-0449">Lipoprotein</keyword>
<keyword id="KW-0472">Membrane</keyword>
<keyword id="KW-0654">Proteoglycan</keyword>
<keyword id="KW-1185">Reference proteome</keyword>
<keyword id="KW-0677">Repeat</keyword>
<keyword id="KW-0732">Signal</keyword>
<evidence type="ECO:0000255" key="1"/>
<evidence type="ECO:0000255" key="2">
    <source>
        <dbReference type="PROSITE-ProRule" id="PRU00082"/>
    </source>
</evidence>
<evidence type="ECO:0000256" key="3">
    <source>
        <dbReference type="SAM" id="MobiDB-lite"/>
    </source>
</evidence>
<evidence type="ECO:0000269" key="4">
    <source>
    </source>
</evidence>
<evidence type="ECO:0000269" key="5">
    <source>
    </source>
</evidence>
<evidence type="ECO:0000305" key="6"/>